<sequence length="699" mass="75453">MNPIVKSFEYGQHTVTLETGVIARQADAAVLASMGDTTVLVTVVGKKEAEAGRDFFPLTVNYQEKTYAAGKIPGGFFKREGRPSEDETLIARLIDRPIRPLFPNGFKNEVQVIITVVSVDPQIEPDIISMIGTSAALAISGIPFSGPLGAARVGYINGEYVLNPTVAQIETSQLNLVVAGTASAVLMVESEAQALPEEVMLGSVVYGHDQQQVVINAIAEFKAEAGKPMWDWTAPVQDETLVAQIKELAEAGLGDAYKIQVKQDRYAQVAVVKAATKEALLASNPNIDLREVDNLLGSLEKKVVRGRIIRGEPRIDGREPDMIRALSVLAGVLPRTHGSALFTRGETQALVTCTLGTERDAQKIDSIMGERTNRFMLHYNFPPYSVGETGMVGSPKRREIGHGKLAWRGINAVMPSAEEFPYSVRVVSEITESNGSSSMASVCGTSLALMDAGVPIKTSVAGIAMGLVKEGDDFVVLSDILGDEDHLGDMDFKVAGTRGGITALQMDIKIEGITKEIMEIALQQAYGARVHILNVMDQAIGSHRDDISDHAPRITTIKINPEKIRDVIGKGGAVIRALTEETGTTIELEDDGTVRIASSNGEATKEAIRRIEEITSEVEVGRIYNGKVIRIVDFGAFVNILPGKDGLVHISQISDERVANVSDHLELNQEVAVKVMEVDRQGRVRLSIKEAQTKEAAAE</sequence>
<name>PNP_SHESW</name>
<reference key="1">
    <citation type="submission" date="2006-12" db="EMBL/GenBank/DDBJ databases">
        <title>Complete sequence of Shewanella sp. W3-18-1.</title>
        <authorList>
            <consortium name="US DOE Joint Genome Institute"/>
            <person name="Copeland A."/>
            <person name="Lucas S."/>
            <person name="Lapidus A."/>
            <person name="Barry K."/>
            <person name="Detter J.C."/>
            <person name="Glavina del Rio T."/>
            <person name="Hammon N."/>
            <person name="Israni S."/>
            <person name="Dalin E."/>
            <person name="Tice H."/>
            <person name="Pitluck S."/>
            <person name="Chain P."/>
            <person name="Malfatti S."/>
            <person name="Shin M."/>
            <person name="Vergez L."/>
            <person name="Schmutz J."/>
            <person name="Larimer F."/>
            <person name="Land M."/>
            <person name="Hauser L."/>
            <person name="Kyrpides N."/>
            <person name="Lykidis A."/>
            <person name="Tiedje J."/>
            <person name="Richardson P."/>
        </authorList>
    </citation>
    <scope>NUCLEOTIDE SEQUENCE [LARGE SCALE GENOMIC DNA]</scope>
    <source>
        <strain>W3-18-1</strain>
    </source>
</reference>
<evidence type="ECO:0000255" key="1">
    <source>
        <dbReference type="HAMAP-Rule" id="MF_01595"/>
    </source>
</evidence>
<protein>
    <recommendedName>
        <fullName evidence="1">Polyribonucleotide nucleotidyltransferase</fullName>
        <ecNumber evidence="1">2.7.7.8</ecNumber>
    </recommendedName>
    <alternativeName>
        <fullName evidence="1">Polynucleotide phosphorylase</fullName>
        <shortName evidence="1">PNPase</shortName>
    </alternativeName>
</protein>
<keyword id="KW-0963">Cytoplasm</keyword>
<keyword id="KW-0460">Magnesium</keyword>
<keyword id="KW-0479">Metal-binding</keyword>
<keyword id="KW-0548">Nucleotidyltransferase</keyword>
<keyword id="KW-0694">RNA-binding</keyword>
<keyword id="KW-0808">Transferase</keyword>
<feature type="chain" id="PRO_0000329847" description="Polyribonucleotide nucleotidyltransferase">
    <location>
        <begin position="1"/>
        <end position="699"/>
    </location>
</feature>
<feature type="domain" description="KH" evidence="1">
    <location>
        <begin position="552"/>
        <end position="611"/>
    </location>
</feature>
<feature type="domain" description="S1 motif" evidence="1">
    <location>
        <begin position="621"/>
        <end position="689"/>
    </location>
</feature>
<feature type="binding site" evidence="1">
    <location>
        <position position="485"/>
    </location>
    <ligand>
        <name>Mg(2+)</name>
        <dbReference type="ChEBI" id="CHEBI:18420"/>
    </ligand>
</feature>
<feature type="binding site" evidence="1">
    <location>
        <position position="491"/>
    </location>
    <ligand>
        <name>Mg(2+)</name>
        <dbReference type="ChEBI" id="CHEBI:18420"/>
    </ligand>
</feature>
<comment type="function">
    <text evidence="1">Involved in mRNA degradation. Catalyzes the phosphorolysis of single-stranded polyribonucleotides processively in the 3'- to 5'-direction.</text>
</comment>
<comment type="catalytic activity">
    <reaction evidence="1">
        <text>RNA(n+1) + phosphate = RNA(n) + a ribonucleoside 5'-diphosphate</text>
        <dbReference type="Rhea" id="RHEA:22096"/>
        <dbReference type="Rhea" id="RHEA-COMP:14527"/>
        <dbReference type="Rhea" id="RHEA-COMP:17342"/>
        <dbReference type="ChEBI" id="CHEBI:43474"/>
        <dbReference type="ChEBI" id="CHEBI:57930"/>
        <dbReference type="ChEBI" id="CHEBI:140395"/>
        <dbReference type="EC" id="2.7.7.8"/>
    </reaction>
</comment>
<comment type="cofactor">
    <cofactor evidence="1">
        <name>Mg(2+)</name>
        <dbReference type="ChEBI" id="CHEBI:18420"/>
    </cofactor>
</comment>
<comment type="subunit">
    <text evidence="1">Component of the RNA degradosome, which is a multiprotein complex involved in RNA processing and mRNA degradation.</text>
</comment>
<comment type="subcellular location">
    <subcellularLocation>
        <location evidence="1">Cytoplasm</location>
    </subcellularLocation>
</comment>
<comment type="similarity">
    <text evidence="1">Belongs to the polyribonucleotide nucleotidyltransferase family.</text>
</comment>
<proteinExistence type="inferred from homology"/>
<organism>
    <name type="scientific">Shewanella sp. (strain W3-18-1)</name>
    <dbReference type="NCBI Taxonomy" id="351745"/>
    <lineage>
        <taxon>Bacteria</taxon>
        <taxon>Pseudomonadati</taxon>
        <taxon>Pseudomonadota</taxon>
        <taxon>Gammaproteobacteria</taxon>
        <taxon>Alteromonadales</taxon>
        <taxon>Shewanellaceae</taxon>
        <taxon>Shewanella</taxon>
    </lineage>
</organism>
<accession>A1RGY0</accession>
<dbReference type="EC" id="2.7.7.8" evidence="1"/>
<dbReference type="EMBL" id="CP000503">
    <property type="protein sequence ID" value="ABM23925.1"/>
    <property type="molecule type" value="Genomic_DNA"/>
</dbReference>
<dbReference type="RefSeq" id="WP_011788448.1">
    <property type="nucleotide sequence ID" value="NC_008750.1"/>
</dbReference>
<dbReference type="SMR" id="A1RGY0"/>
<dbReference type="GeneID" id="67444442"/>
<dbReference type="KEGG" id="shw:Sputw3181_1075"/>
<dbReference type="HOGENOM" id="CLU_004217_2_2_6"/>
<dbReference type="Proteomes" id="UP000002597">
    <property type="component" value="Chromosome"/>
</dbReference>
<dbReference type="GO" id="GO:0005829">
    <property type="term" value="C:cytosol"/>
    <property type="evidence" value="ECO:0007669"/>
    <property type="project" value="TreeGrafter"/>
</dbReference>
<dbReference type="GO" id="GO:0000175">
    <property type="term" value="F:3'-5'-RNA exonuclease activity"/>
    <property type="evidence" value="ECO:0007669"/>
    <property type="project" value="TreeGrafter"/>
</dbReference>
<dbReference type="GO" id="GO:0000287">
    <property type="term" value="F:magnesium ion binding"/>
    <property type="evidence" value="ECO:0007669"/>
    <property type="project" value="UniProtKB-UniRule"/>
</dbReference>
<dbReference type="GO" id="GO:0004654">
    <property type="term" value="F:polyribonucleotide nucleotidyltransferase activity"/>
    <property type="evidence" value="ECO:0007669"/>
    <property type="project" value="UniProtKB-UniRule"/>
</dbReference>
<dbReference type="GO" id="GO:0003723">
    <property type="term" value="F:RNA binding"/>
    <property type="evidence" value="ECO:0007669"/>
    <property type="project" value="UniProtKB-UniRule"/>
</dbReference>
<dbReference type="GO" id="GO:0006402">
    <property type="term" value="P:mRNA catabolic process"/>
    <property type="evidence" value="ECO:0007669"/>
    <property type="project" value="UniProtKB-UniRule"/>
</dbReference>
<dbReference type="GO" id="GO:0006396">
    <property type="term" value="P:RNA processing"/>
    <property type="evidence" value="ECO:0007669"/>
    <property type="project" value="InterPro"/>
</dbReference>
<dbReference type="CDD" id="cd02393">
    <property type="entry name" value="KH-I_PNPase"/>
    <property type="match status" value="1"/>
</dbReference>
<dbReference type="CDD" id="cd11363">
    <property type="entry name" value="RNase_PH_PNPase_1"/>
    <property type="match status" value="1"/>
</dbReference>
<dbReference type="CDD" id="cd11364">
    <property type="entry name" value="RNase_PH_PNPase_2"/>
    <property type="match status" value="1"/>
</dbReference>
<dbReference type="CDD" id="cd04472">
    <property type="entry name" value="S1_PNPase"/>
    <property type="match status" value="1"/>
</dbReference>
<dbReference type="FunFam" id="2.40.50.140:FF:000023">
    <property type="entry name" value="Polyribonucleotide nucleotidyltransferase"/>
    <property type="match status" value="1"/>
</dbReference>
<dbReference type="FunFam" id="3.30.1370.10:FF:000001">
    <property type="entry name" value="Polyribonucleotide nucleotidyltransferase"/>
    <property type="match status" value="1"/>
</dbReference>
<dbReference type="FunFam" id="3.30.230.70:FF:000001">
    <property type="entry name" value="Polyribonucleotide nucleotidyltransferase"/>
    <property type="match status" value="1"/>
</dbReference>
<dbReference type="FunFam" id="3.30.230.70:FF:000002">
    <property type="entry name" value="Polyribonucleotide nucleotidyltransferase"/>
    <property type="match status" value="1"/>
</dbReference>
<dbReference type="Gene3D" id="3.30.230.70">
    <property type="entry name" value="GHMP Kinase, N-terminal domain"/>
    <property type="match status" value="2"/>
</dbReference>
<dbReference type="Gene3D" id="3.30.1370.10">
    <property type="entry name" value="K Homology domain, type 1"/>
    <property type="match status" value="1"/>
</dbReference>
<dbReference type="Gene3D" id="2.40.50.140">
    <property type="entry name" value="Nucleic acid-binding proteins"/>
    <property type="match status" value="1"/>
</dbReference>
<dbReference type="HAMAP" id="MF_01595">
    <property type="entry name" value="PNPase"/>
    <property type="match status" value="1"/>
</dbReference>
<dbReference type="InterPro" id="IPR001247">
    <property type="entry name" value="ExoRNase_PH_dom1"/>
</dbReference>
<dbReference type="InterPro" id="IPR015847">
    <property type="entry name" value="ExoRNase_PH_dom2"/>
</dbReference>
<dbReference type="InterPro" id="IPR036345">
    <property type="entry name" value="ExoRNase_PH_dom2_sf"/>
</dbReference>
<dbReference type="InterPro" id="IPR004087">
    <property type="entry name" value="KH_dom"/>
</dbReference>
<dbReference type="InterPro" id="IPR004088">
    <property type="entry name" value="KH_dom_type_1"/>
</dbReference>
<dbReference type="InterPro" id="IPR036612">
    <property type="entry name" value="KH_dom_type_1_sf"/>
</dbReference>
<dbReference type="InterPro" id="IPR012340">
    <property type="entry name" value="NA-bd_OB-fold"/>
</dbReference>
<dbReference type="InterPro" id="IPR012162">
    <property type="entry name" value="PNPase"/>
</dbReference>
<dbReference type="InterPro" id="IPR027408">
    <property type="entry name" value="PNPase/RNase_PH_dom_sf"/>
</dbReference>
<dbReference type="InterPro" id="IPR015848">
    <property type="entry name" value="PNPase_PH_RNA-bd_bac/org-type"/>
</dbReference>
<dbReference type="InterPro" id="IPR036456">
    <property type="entry name" value="PNPase_PH_RNA-bd_sf"/>
</dbReference>
<dbReference type="InterPro" id="IPR020568">
    <property type="entry name" value="Ribosomal_Su5_D2-typ_SF"/>
</dbReference>
<dbReference type="InterPro" id="IPR003029">
    <property type="entry name" value="S1_domain"/>
</dbReference>
<dbReference type="NCBIfam" id="TIGR03591">
    <property type="entry name" value="polynuc_phos"/>
    <property type="match status" value="1"/>
</dbReference>
<dbReference type="NCBIfam" id="NF008805">
    <property type="entry name" value="PRK11824.1"/>
    <property type="match status" value="1"/>
</dbReference>
<dbReference type="PANTHER" id="PTHR11252">
    <property type="entry name" value="POLYRIBONUCLEOTIDE NUCLEOTIDYLTRANSFERASE"/>
    <property type="match status" value="1"/>
</dbReference>
<dbReference type="PANTHER" id="PTHR11252:SF0">
    <property type="entry name" value="POLYRIBONUCLEOTIDE NUCLEOTIDYLTRANSFERASE 1, MITOCHONDRIAL"/>
    <property type="match status" value="1"/>
</dbReference>
<dbReference type="Pfam" id="PF00013">
    <property type="entry name" value="KH_1"/>
    <property type="match status" value="1"/>
</dbReference>
<dbReference type="Pfam" id="PF03726">
    <property type="entry name" value="PNPase"/>
    <property type="match status" value="1"/>
</dbReference>
<dbReference type="Pfam" id="PF01138">
    <property type="entry name" value="RNase_PH"/>
    <property type="match status" value="2"/>
</dbReference>
<dbReference type="Pfam" id="PF03725">
    <property type="entry name" value="RNase_PH_C"/>
    <property type="match status" value="2"/>
</dbReference>
<dbReference type="Pfam" id="PF00575">
    <property type="entry name" value="S1"/>
    <property type="match status" value="1"/>
</dbReference>
<dbReference type="PIRSF" id="PIRSF005499">
    <property type="entry name" value="PNPase"/>
    <property type="match status" value="1"/>
</dbReference>
<dbReference type="SMART" id="SM00322">
    <property type="entry name" value="KH"/>
    <property type="match status" value="1"/>
</dbReference>
<dbReference type="SMART" id="SM00316">
    <property type="entry name" value="S1"/>
    <property type="match status" value="1"/>
</dbReference>
<dbReference type="SUPFAM" id="SSF54791">
    <property type="entry name" value="Eukaryotic type KH-domain (KH-domain type I)"/>
    <property type="match status" value="1"/>
</dbReference>
<dbReference type="SUPFAM" id="SSF50249">
    <property type="entry name" value="Nucleic acid-binding proteins"/>
    <property type="match status" value="1"/>
</dbReference>
<dbReference type="SUPFAM" id="SSF46915">
    <property type="entry name" value="Polynucleotide phosphorylase/guanosine pentaphosphate synthase (PNPase/GPSI), domain 3"/>
    <property type="match status" value="1"/>
</dbReference>
<dbReference type="SUPFAM" id="SSF55666">
    <property type="entry name" value="Ribonuclease PH domain 2-like"/>
    <property type="match status" value="2"/>
</dbReference>
<dbReference type="SUPFAM" id="SSF54211">
    <property type="entry name" value="Ribosomal protein S5 domain 2-like"/>
    <property type="match status" value="2"/>
</dbReference>
<dbReference type="PROSITE" id="PS50084">
    <property type="entry name" value="KH_TYPE_1"/>
    <property type="match status" value="1"/>
</dbReference>
<dbReference type="PROSITE" id="PS50126">
    <property type="entry name" value="S1"/>
    <property type="match status" value="1"/>
</dbReference>
<gene>
    <name evidence="1" type="primary">pnp</name>
    <name type="ordered locus">Sputw3181_1075</name>
</gene>